<comment type="function">
    <text evidence="2">Associates with CDK-2 and CDK-3 and activates the CDK kinases.</text>
</comment>
<comment type="subunit">
    <text evidence="2 3">Interacts with CDKA-1, CDKD-2 and CDKD-3, but not CDKD-1 and CDKF-1.</text>
</comment>
<comment type="subcellular location">
    <subcellularLocation>
        <location evidence="3">Cytoplasm</location>
    </subcellularLocation>
    <subcellularLocation>
        <location evidence="3">Nucleus</location>
    </subcellularLocation>
</comment>
<comment type="similarity">
    <text evidence="4">Belongs to the cyclin family.</text>
</comment>
<proteinExistence type="evidence at protein level"/>
<dbReference type="EMBL" id="AB051072">
    <property type="protein sequence ID" value="BAB72144.1"/>
    <property type="molecule type" value="mRNA"/>
</dbReference>
<dbReference type="EMBL" id="AC007478">
    <property type="status" value="NOT_ANNOTATED_CDS"/>
    <property type="molecule type" value="Genomic_DNA"/>
</dbReference>
<dbReference type="EMBL" id="CP002688">
    <property type="protein sequence ID" value="AED93707.1"/>
    <property type="molecule type" value="Genomic_DNA"/>
</dbReference>
<dbReference type="EMBL" id="AK118707">
    <property type="protein sequence ID" value="BAC43301.1"/>
    <property type="molecule type" value="mRNA"/>
</dbReference>
<dbReference type="RefSeq" id="NP_198114.2">
    <property type="nucleotide sequence ID" value="NM_122644.5"/>
</dbReference>
<dbReference type="SMR" id="Q8W5S1"/>
<dbReference type="BioGRID" id="18098">
    <property type="interactions" value="42"/>
</dbReference>
<dbReference type="FunCoup" id="Q8W5S1">
    <property type="interactions" value="3977"/>
</dbReference>
<dbReference type="IntAct" id="Q8W5S1">
    <property type="interactions" value="23"/>
</dbReference>
<dbReference type="STRING" id="3702.Q8W5S1"/>
<dbReference type="iPTMnet" id="Q8W5S1"/>
<dbReference type="PaxDb" id="3702-AT5G27620.1"/>
<dbReference type="EnsemblPlants" id="AT5G27620.1">
    <property type="protein sequence ID" value="AT5G27620.1"/>
    <property type="gene ID" value="AT5G27620"/>
</dbReference>
<dbReference type="GeneID" id="832824"/>
<dbReference type="Gramene" id="AT5G27620.1">
    <property type="protein sequence ID" value="AT5G27620.1"/>
    <property type="gene ID" value="AT5G27620"/>
</dbReference>
<dbReference type="KEGG" id="ath:AT5G27620"/>
<dbReference type="Araport" id="AT5G27620"/>
<dbReference type="TAIR" id="AT5G27620">
    <property type="gene designation" value="CYCH"/>
</dbReference>
<dbReference type="eggNOG" id="KOG2496">
    <property type="taxonomic scope" value="Eukaryota"/>
</dbReference>
<dbReference type="HOGENOM" id="CLU_022620_1_1_1"/>
<dbReference type="InParanoid" id="Q8W5S1"/>
<dbReference type="OMA" id="EPQIMLK"/>
<dbReference type="PhylomeDB" id="Q8W5S1"/>
<dbReference type="CD-CODE" id="4299E36E">
    <property type="entry name" value="Nucleolus"/>
</dbReference>
<dbReference type="PRO" id="PR:Q8W5S1"/>
<dbReference type="Proteomes" id="UP000006548">
    <property type="component" value="Chromosome 5"/>
</dbReference>
<dbReference type="ExpressionAtlas" id="Q8W5S1">
    <property type="expression patterns" value="baseline and differential"/>
</dbReference>
<dbReference type="GO" id="GO:0005737">
    <property type="term" value="C:cytoplasm"/>
    <property type="evidence" value="ECO:0000314"/>
    <property type="project" value="TAIR"/>
</dbReference>
<dbReference type="GO" id="GO:0005634">
    <property type="term" value="C:nucleus"/>
    <property type="evidence" value="ECO:0000314"/>
    <property type="project" value="TAIR"/>
</dbReference>
<dbReference type="GO" id="GO:0016538">
    <property type="term" value="F:cyclin-dependent protein serine/threonine kinase regulator activity"/>
    <property type="evidence" value="ECO:0007669"/>
    <property type="project" value="InterPro"/>
</dbReference>
<dbReference type="GO" id="GO:0004672">
    <property type="term" value="F:protein kinase activity"/>
    <property type="evidence" value="ECO:0000314"/>
    <property type="project" value="TAIR"/>
</dbReference>
<dbReference type="GO" id="GO:0051301">
    <property type="term" value="P:cell division"/>
    <property type="evidence" value="ECO:0007669"/>
    <property type="project" value="UniProtKB-KW"/>
</dbReference>
<dbReference type="GO" id="GO:0072593">
    <property type="term" value="P:reactive oxygen species metabolic process"/>
    <property type="evidence" value="ECO:0000315"/>
    <property type="project" value="TAIR"/>
</dbReference>
<dbReference type="GO" id="GO:0006355">
    <property type="term" value="P:regulation of DNA-templated transcription"/>
    <property type="evidence" value="ECO:0000270"/>
    <property type="project" value="TAIR"/>
</dbReference>
<dbReference type="GO" id="GO:2000070">
    <property type="term" value="P:regulation of response to water deprivation"/>
    <property type="evidence" value="ECO:0000315"/>
    <property type="project" value="TAIR"/>
</dbReference>
<dbReference type="GO" id="GO:0010119">
    <property type="term" value="P:regulation of stomatal movement"/>
    <property type="evidence" value="ECO:0000315"/>
    <property type="project" value="TAIR"/>
</dbReference>
<dbReference type="GO" id="GO:0006357">
    <property type="term" value="P:regulation of transcription by RNA polymerase II"/>
    <property type="evidence" value="ECO:0007669"/>
    <property type="project" value="InterPro"/>
</dbReference>
<dbReference type="GO" id="GO:0009637">
    <property type="term" value="P:response to blue light"/>
    <property type="evidence" value="ECO:0000315"/>
    <property type="project" value="CACAO"/>
</dbReference>
<dbReference type="GO" id="GO:0009414">
    <property type="term" value="P:response to water deprivation"/>
    <property type="evidence" value="ECO:0000315"/>
    <property type="project" value="CACAO"/>
</dbReference>
<dbReference type="GO" id="GO:1990069">
    <property type="term" value="P:stomatal opening"/>
    <property type="evidence" value="ECO:0000315"/>
    <property type="project" value="TAIR"/>
</dbReference>
<dbReference type="CDD" id="cd20585">
    <property type="entry name" value="CYCLIN_AcCycH_rpt1"/>
    <property type="match status" value="1"/>
</dbReference>
<dbReference type="CDD" id="cd20586">
    <property type="entry name" value="CYCLIN_AcCycH_rpt2"/>
    <property type="match status" value="1"/>
</dbReference>
<dbReference type="FunFam" id="1.10.472.10:FF:000029">
    <property type="entry name" value="Cyclin h"/>
    <property type="match status" value="1"/>
</dbReference>
<dbReference type="FunFam" id="1.10.472.10:FF:000063">
    <property type="entry name" value="cyclin-H1-1"/>
    <property type="match status" value="1"/>
</dbReference>
<dbReference type="Gene3D" id="1.10.472.10">
    <property type="entry name" value="Cyclin-like"/>
    <property type="match status" value="2"/>
</dbReference>
<dbReference type="InterPro" id="IPR013763">
    <property type="entry name" value="Cyclin-like_dom"/>
</dbReference>
<dbReference type="InterPro" id="IPR036915">
    <property type="entry name" value="Cyclin-like_sf"/>
</dbReference>
<dbReference type="InterPro" id="IPR043198">
    <property type="entry name" value="Cyclin/Ssn8"/>
</dbReference>
<dbReference type="InterPro" id="IPR031658">
    <property type="entry name" value="Cyclin_C_2"/>
</dbReference>
<dbReference type="InterPro" id="IPR006671">
    <property type="entry name" value="Cyclin_N"/>
</dbReference>
<dbReference type="PANTHER" id="PTHR10026">
    <property type="entry name" value="CYCLIN"/>
    <property type="match status" value="1"/>
</dbReference>
<dbReference type="Pfam" id="PF16899">
    <property type="entry name" value="Cyclin_C_2"/>
    <property type="match status" value="1"/>
</dbReference>
<dbReference type="Pfam" id="PF00134">
    <property type="entry name" value="Cyclin_N"/>
    <property type="match status" value="1"/>
</dbReference>
<dbReference type="SMART" id="SM00385">
    <property type="entry name" value="CYCLIN"/>
    <property type="match status" value="1"/>
</dbReference>
<dbReference type="SUPFAM" id="SSF47954">
    <property type="entry name" value="Cyclin-like"/>
    <property type="match status" value="2"/>
</dbReference>
<name>CCH11_ARATH</name>
<evidence type="ECO:0000256" key="1">
    <source>
        <dbReference type="SAM" id="MobiDB-lite"/>
    </source>
</evidence>
<evidence type="ECO:0000269" key="2">
    <source>
    </source>
</evidence>
<evidence type="ECO:0000269" key="3">
    <source>
    </source>
</evidence>
<evidence type="ECO:0000305" key="4"/>
<evidence type="ECO:0007744" key="5">
    <source>
    </source>
</evidence>
<keyword id="KW-0007">Acetylation</keyword>
<keyword id="KW-0131">Cell cycle</keyword>
<keyword id="KW-0132">Cell division</keyword>
<keyword id="KW-0195">Cyclin</keyword>
<keyword id="KW-0963">Cytoplasm</keyword>
<keyword id="KW-0539">Nucleus</keyword>
<keyword id="KW-1185">Reference proteome</keyword>
<reference key="1">
    <citation type="journal article" date="2004" name="Plant Cell">
        <title>The plant-specific kinase CDKF;1 is involved in activating phosphorylation of cyclin-dependent kinase-activating kinases in Arabidopsis.</title>
        <authorList>
            <person name="Shimotohno A."/>
            <person name="Umeda-Hara C."/>
            <person name="Bisova K."/>
            <person name="Uchimiya H."/>
            <person name="Umeda M."/>
        </authorList>
    </citation>
    <scope>NUCLEOTIDE SEQUENCE [MRNA]</scope>
    <scope>FUNCTION</scope>
    <scope>INTERACTION WITH CDKA-1; CDKD-2 AND CDKD-3</scope>
</reference>
<reference key="2">
    <citation type="journal article" date="2000" name="Nature">
        <title>Sequence and analysis of chromosome 5 of the plant Arabidopsis thaliana.</title>
        <authorList>
            <person name="Tabata S."/>
            <person name="Kaneko T."/>
            <person name="Nakamura Y."/>
            <person name="Kotani H."/>
            <person name="Kato T."/>
            <person name="Asamizu E."/>
            <person name="Miyajima N."/>
            <person name="Sasamoto S."/>
            <person name="Kimura T."/>
            <person name="Hosouchi T."/>
            <person name="Kawashima K."/>
            <person name="Kohara M."/>
            <person name="Matsumoto M."/>
            <person name="Matsuno A."/>
            <person name="Muraki A."/>
            <person name="Nakayama S."/>
            <person name="Nakazaki N."/>
            <person name="Naruo K."/>
            <person name="Okumura S."/>
            <person name="Shinpo S."/>
            <person name="Takeuchi C."/>
            <person name="Wada T."/>
            <person name="Watanabe A."/>
            <person name="Yamada M."/>
            <person name="Yasuda M."/>
            <person name="Sato S."/>
            <person name="de la Bastide M."/>
            <person name="Huang E."/>
            <person name="Spiegel L."/>
            <person name="Gnoj L."/>
            <person name="O'Shaughnessy A."/>
            <person name="Preston R."/>
            <person name="Habermann K."/>
            <person name="Murray J."/>
            <person name="Johnson D."/>
            <person name="Rohlfing T."/>
            <person name="Nelson J."/>
            <person name="Stoneking T."/>
            <person name="Pepin K."/>
            <person name="Spieth J."/>
            <person name="Sekhon M."/>
            <person name="Armstrong J."/>
            <person name="Becker M."/>
            <person name="Belter E."/>
            <person name="Cordum H."/>
            <person name="Cordes M."/>
            <person name="Courtney L."/>
            <person name="Courtney W."/>
            <person name="Dante M."/>
            <person name="Du H."/>
            <person name="Edwards J."/>
            <person name="Fryman J."/>
            <person name="Haakensen B."/>
            <person name="Lamar E."/>
            <person name="Latreille P."/>
            <person name="Leonard S."/>
            <person name="Meyer R."/>
            <person name="Mulvaney E."/>
            <person name="Ozersky P."/>
            <person name="Riley A."/>
            <person name="Strowmatt C."/>
            <person name="Wagner-McPherson C."/>
            <person name="Wollam A."/>
            <person name="Yoakum M."/>
            <person name="Bell M."/>
            <person name="Dedhia N."/>
            <person name="Parnell L."/>
            <person name="Shah R."/>
            <person name="Rodriguez M."/>
            <person name="Hoon See L."/>
            <person name="Vil D."/>
            <person name="Baker J."/>
            <person name="Kirchoff K."/>
            <person name="Toth K."/>
            <person name="King L."/>
            <person name="Bahret A."/>
            <person name="Miller B."/>
            <person name="Marra M.A."/>
            <person name="Martienssen R."/>
            <person name="McCombie W.R."/>
            <person name="Wilson R.K."/>
            <person name="Murphy G."/>
            <person name="Bancroft I."/>
            <person name="Volckaert G."/>
            <person name="Wambutt R."/>
            <person name="Duesterhoeft A."/>
            <person name="Stiekema W."/>
            <person name="Pohl T."/>
            <person name="Entian K.-D."/>
            <person name="Terryn N."/>
            <person name="Hartley N."/>
            <person name="Bent E."/>
            <person name="Johnson S."/>
            <person name="Langham S.-A."/>
            <person name="McCullagh B."/>
            <person name="Robben J."/>
            <person name="Grymonprez B."/>
            <person name="Zimmermann W."/>
            <person name="Ramsperger U."/>
            <person name="Wedler H."/>
            <person name="Balke K."/>
            <person name="Wedler E."/>
            <person name="Peters S."/>
            <person name="van Staveren M."/>
            <person name="Dirkse W."/>
            <person name="Mooijman P."/>
            <person name="Klein Lankhorst R."/>
            <person name="Weitzenegger T."/>
            <person name="Bothe G."/>
            <person name="Rose M."/>
            <person name="Hauf J."/>
            <person name="Berneiser S."/>
            <person name="Hempel S."/>
            <person name="Feldpausch M."/>
            <person name="Lamberth S."/>
            <person name="Villarroel R."/>
            <person name="Gielen J."/>
            <person name="Ardiles W."/>
            <person name="Bents O."/>
            <person name="Lemcke K."/>
            <person name="Kolesov G."/>
            <person name="Mayer K.F.X."/>
            <person name="Rudd S."/>
            <person name="Schoof H."/>
            <person name="Schueller C."/>
            <person name="Zaccaria P."/>
            <person name="Mewes H.-W."/>
            <person name="Bevan M."/>
            <person name="Fransz P.F."/>
        </authorList>
    </citation>
    <scope>NUCLEOTIDE SEQUENCE [LARGE SCALE GENOMIC DNA]</scope>
    <source>
        <strain>cv. Columbia</strain>
    </source>
</reference>
<reference key="3">
    <citation type="journal article" date="2017" name="Plant J.">
        <title>Araport11: a complete reannotation of the Arabidopsis thaliana reference genome.</title>
        <authorList>
            <person name="Cheng C.Y."/>
            <person name="Krishnakumar V."/>
            <person name="Chan A.P."/>
            <person name="Thibaud-Nissen F."/>
            <person name="Schobel S."/>
            <person name="Town C.D."/>
        </authorList>
    </citation>
    <scope>GENOME REANNOTATION</scope>
    <source>
        <strain>cv. Columbia</strain>
    </source>
</reference>
<reference key="4">
    <citation type="journal article" date="2002" name="Science">
        <title>Functional annotation of a full-length Arabidopsis cDNA collection.</title>
        <authorList>
            <person name="Seki M."/>
            <person name="Narusaka M."/>
            <person name="Kamiya A."/>
            <person name="Ishida J."/>
            <person name="Satou M."/>
            <person name="Sakurai T."/>
            <person name="Nakajima M."/>
            <person name="Enju A."/>
            <person name="Akiyama K."/>
            <person name="Oono Y."/>
            <person name="Muramatsu M."/>
            <person name="Hayashizaki Y."/>
            <person name="Kawai J."/>
            <person name="Carninci P."/>
            <person name="Itoh M."/>
            <person name="Ishii Y."/>
            <person name="Arakawa T."/>
            <person name="Shibata K."/>
            <person name="Shinagawa A."/>
            <person name="Shinozaki K."/>
        </authorList>
    </citation>
    <scope>NUCLEOTIDE SEQUENCE [LARGE SCALE MRNA]</scope>
    <source>
        <strain>cv. Columbia</strain>
    </source>
</reference>
<reference key="5">
    <citation type="journal article" date="2004" name="Plant Physiol.">
        <title>Genome-wide analysis of the cyclin family in Arabidopsis and comparative phylogenetic analysis of plant cyclin-like proteins.</title>
        <authorList>
            <person name="Wang G."/>
            <person name="Kong H."/>
            <person name="Sun Y."/>
            <person name="Zhang X."/>
            <person name="Zhang W."/>
            <person name="Altman N."/>
            <person name="dePamphilis C.W."/>
            <person name="Ma H."/>
        </authorList>
    </citation>
    <scope>GENE FAMILY</scope>
    <scope>NOMENCLATURE</scope>
</reference>
<reference key="6">
    <citation type="journal article" date="2006" name="Plant J.">
        <title>Diverse phosphoregulatory mechanisms controlling cyclin-dependent kinase-activating kinases in Arabidopsis.</title>
        <authorList>
            <person name="Shimotohno A."/>
            <person name="Ohno R."/>
            <person name="Bisova K."/>
            <person name="Sakaguchi N."/>
            <person name="Huang J."/>
            <person name="Koncz C."/>
            <person name="Uchimiya H."/>
            <person name="Umeda M."/>
        </authorList>
    </citation>
    <scope>SUBCELLULAR LOCATION</scope>
    <scope>INTERACTION WITH CDKD-2 AND CDKD-3</scope>
    <source>
        <strain>cv. Columbia</strain>
    </source>
</reference>
<reference key="7">
    <citation type="journal article" date="2012" name="Mol. Cell. Proteomics">
        <title>Comparative large-scale characterisation of plant vs. mammal proteins reveals similar and idiosyncratic N-alpha acetylation features.</title>
        <authorList>
            <person name="Bienvenut W.V."/>
            <person name="Sumpton D."/>
            <person name="Martinez A."/>
            <person name="Lilla S."/>
            <person name="Espagne C."/>
            <person name="Meinnel T."/>
            <person name="Giglione C."/>
        </authorList>
    </citation>
    <scope>ACETYLATION [LARGE SCALE ANALYSIS] AT ALA-2</scope>
    <scope>CLEAVAGE OF INITIATOR METHIONINE [LARGE SCALE ANALYSIS]</scope>
    <scope>IDENTIFICATION BY MASS SPECTROMETRY [LARGE SCALE ANALYSIS]</scope>
</reference>
<protein>
    <recommendedName>
        <fullName>Cyclin-H1-1</fullName>
        <shortName>CycH1;1</shortName>
    </recommendedName>
</protein>
<feature type="initiator methionine" description="Removed" evidence="5">
    <location>
        <position position="1"/>
    </location>
</feature>
<feature type="chain" id="PRO_0000287049" description="Cyclin-H1-1">
    <location>
        <begin position="2"/>
        <end position="336"/>
    </location>
</feature>
<feature type="region of interest" description="Disordered" evidence="1">
    <location>
        <begin position="297"/>
        <end position="336"/>
    </location>
</feature>
<feature type="compositionally biased region" description="Basic residues" evidence="1">
    <location>
        <begin position="312"/>
        <end position="322"/>
    </location>
</feature>
<feature type="modified residue" description="N-acetylalanine" evidence="5">
    <location>
        <position position="2"/>
    </location>
</feature>
<sequence>MADFQTSTQRAKWIFTPQKLAERYKAANQRAVQMLEKCGTTQVEVDASGSLTYPKDKVGSGDQADKKLKPLSADEERFMRAFYEAKVQEVCSAFAFPHKIQATALQYFKRFYLQWSVMQHHPKEIMLTCVYAACKIEENHVSAEEIGKGINQDHRIILKYEMAVLQSLEFDLIVYAPYRAIEGFVNNMEEFLQARDDEIQKLESLLKGATAEADKVMLTDAPLLFPPGQLALASLRIANGVLGVIDFDRYLENIVSQPNSEHTTSELTKLLDNIEYLVKNYKCPSEKDMKHINRKLKSCLGHSSSHDESKKREKRSKHKSHRSSNDTPNGAPPPIG</sequence>
<gene>
    <name type="primary">CYCH1-1</name>
    <name type="synonym">CYCH1</name>
    <name type="ordered locus">At5g27620</name>
    <name type="ORF">F15A18.80</name>
</gene>
<accession>Q8W5S1</accession>
<organism>
    <name type="scientific">Arabidopsis thaliana</name>
    <name type="common">Mouse-ear cress</name>
    <dbReference type="NCBI Taxonomy" id="3702"/>
    <lineage>
        <taxon>Eukaryota</taxon>
        <taxon>Viridiplantae</taxon>
        <taxon>Streptophyta</taxon>
        <taxon>Embryophyta</taxon>
        <taxon>Tracheophyta</taxon>
        <taxon>Spermatophyta</taxon>
        <taxon>Magnoliopsida</taxon>
        <taxon>eudicotyledons</taxon>
        <taxon>Gunneridae</taxon>
        <taxon>Pentapetalae</taxon>
        <taxon>rosids</taxon>
        <taxon>malvids</taxon>
        <taxon>Brassicales</taxon>
        <taxon>Brassicaceae</taxon>
        <taxon>Camelineae</taxon>
        <taxon>Arabidopsis</taxon>
    </lineage>
</organism>